<gene>
    <name evidence="1" type="primary">pth</name>
    <name type="ordered locus">BT0787</name>
</gene>
<organism>
    <name type="scientific">Borrelia turicatae (strain 91E135)</name>
    <dbReference type="NCBI Taxonomy" id="314724"/>
    <lineage>
        <taxon>Bacteria</taxon>
        <taxon>Pseudomonadati</taxon>
        <taxon>Spirochaetota</taxon>
        <taxon>Spirochaetia</taxon>
        <taxon>Spirochaetales</taxon>
        <taxon>Borreliaceae</taxon>
        <taxon>Borrelia</taxon>
    </lineage>
</organism>
<keyword id="KW-0963">Cytoplasm</keyword>
<keyword id="KW-0378">Hydrolase</keyword>
<keyword id="KW-1185">Reference proteome</keyword>
<keyword id="KW-0694">RNA-binding</keyword>
<keyword id="KW-0820">tRNA-binding</keyword>
<reference key="1">
    <citation type="submission" date="2004-12" db="EMBL/GenBank/DDBJ databases">
        <title>The genome sequence of Borrelia hermsii and Borrelia turicatae: comparative analysis of two agents of endemic N. America relapsing fever.</title>
        <authorList>
            <person name="Porcella S.F."/>
            <person name="Raffel S.J."/>
            <person name="Schrumpf M.E."/>
            <person name="Montgomery B."/>
            <person name="Smith T."/>
            <person name="Schwan T.G."/>
        </authorList>
    </citation>
    <scope>NUCLEOTIDE SEQUENCE [LARGE SCALE GENOMIC DNA]</scope>
    <source>
        <strain>91E135</strain>
    </source>
</reference>
<dbReference type="EC" id="3.1.1.29" evidence="1"/>
<dbReference type="EMBL" id="CP000049">
    <property type="protein sequence ID" value="AAX18101.1"/>
    <property type="molecule type" value="Genomic_DNA"/>
</dbReference>
<dbReference type="RefSeq" id="WP_011772719.1">
    <property type="nucleotide sequence ID" value="NC_008710.1"/>
</dbReference>
<dbReference type="SMR" id="A1R0L0"/>
<dbReference type="KEGG" id="btu:BT0787"/>
<dbReference type="eggNOG" id="COG0193">
    <property type="taxonomic scope" value="Bacteria"/>
</dbReference>
<dbReference type="HOGENOM" id="CLU_062456_4_1_12"/>
<dbReference type="Proteomes" id="UP000001205">
    <property type="component" value="Chromosome"/>
</dbReference>
<dbReference type="GO" id="GO:0005737">
    <property type="term" value="C:cytoplasm"/>
    <property type="evidence" value="ECO:0007669"/>
    <property type="project" value="UniProtKB-SubCell"/>
</dbReference>
<dbReference type="GO" id="GO:0004045">
    <property type="term" value="F:peptidyl-tRNA hydrolase activity"/>
    <property type="evidence" value="ECO:0007669"/>
    <property type="project" value="UniProtKB-UniRule"/>
</dbReference>
<dbReference type="GO" id="GO:0000049">
    <property type="term" value="F:tRNA binding"/>
    <property type="evidence" value="ECO:0007669"/>
    <property type="project" value="UniProtKB-UniRule"/>
</dbReference>
<dbReference type="GO" id="GO:0006515">
    <property type="term" value="P:protein quality control for misfolded or incompletely synthesized proteins"/>
    <property type="evidence" value="ECO:0007669"/>
    <property type="project" value="UniProtKB-UniRule"/>
</dbReference>
<dbReference type="GO" id="GO:0072344">
    <property type="term" value="P:rescue of stalled ribosome"/>
    <property type="evidence" value="ECO:0007669"/>
    <property type="project" value="UniProtKB-UniRule"/>
</dbReference>
<dbReference type="CDD" id="cd00462">
    <property type="entry name" value="PTH"/>
    <property type="match status" value="1"/>
</dbReference>
<dbReference type="Gene3D" id="3.40.50.1470">
    <property type="entry name" value="Peptidyl-tRNA hydrolase"/>
    <property type="match status" value="1"/>
</dbReference>
<dbReference type="HAMAP" id="MF_00083">
    <property type="entry name" value="Pept_tRNA_hydro_bact"/>
    <property type="match status" value="1"/>
</dbReference>
<dbReference type="InterPro" id="IPR001328">
    <property type="entry name" value="Pept_tRNA_hydro"/>
</dbReference>
<dbReference type="InterPro" id="IPR018171">
    <property type="entry name" value="Pept_tRNA_hydro_CS"/>
</dbReference>
<dbReference type="InterPro" id="IPR036416">
    <property type="entry name" value="Pept_tRNA_hydro_sf"/>
</dbReference>
<dbReference type="NCBIfam" id="TIGR00447">
    <property type="entry name" value="pth"/>
    <property type="match status" value="1"/>
</dbReference>
<dbReference type="PANTHER" id="PTHR17224">
    <property type="entry name" value="PEPTIDYL-TRNA HYDROLASE"/>
    <property type="match status" value="1"/>
</dbReference>
<dbReference type="PANTHER" id="PTHR17224:SF1">
    <property type="entry name" value="PEPTIDYL-TRNA HYDROLASE"/>
    <property type="match status" value="1"/>
</dbReference>
<dbReference type="Pfam" id="PF01195">
    <property type="entry name" value="Pept_tRNA_hydro"/>
    <property type="match status" value="1"/>
</dbReference>
<dbReference type="SUPFAM" id="SSF53178">
    <property type="entry name" value="Peptidyl-tRNA hydrolase-like"/>
    <property type="match status" value="1"/>
</dbReference>
<dbReference type="PROSITE" id="PS01195">
    <property type="entry name" value="PEPT_TRNA_HYDROL_1"/>
    <property type="match status" value="1"/>
</dbReference>
<dbReference type="PROSITE" id="PS01196">
    <property type="entry name" value="PEPT_TRNA_HYDROL_2"/>
    <property type="match status" value="1"/>
</dbReference>
<accession>A1R0L0</accession>
<name>PTH_BORT9</name>
<sequence>MDLLIVGLGNPGSNFFHTRHNVGFGLIDKLVVKHGLSLKKVKNYEYSDFNFENKRIVLIKPLTYMNLSGNIFPSVFARFYMKMTNLLIVVDNVDLPLGKCKLRKVGGTSTHNGLRSISGSLGSTKYSRLYIGVGNNNESSLRDFVLAKFSDSELKRIKNVFNFLSEEILSIDECNFENKIATINSSSF</sequence>
<evidence type="ECO:0000255" key="1">
    <source>
        <dbReference type="HAMAP-Rule" id="MF_00083"/>
    </source>
</evidence>
<comment type="function">
    <text evidence="1">Hydrolyzes ribosome-free peptidyl-tRNAs (with 1 or more amino acids incorporated), which drop off the ribosome during protein synthesis, or as a result of ribosome stalling.</text>
</comment>
<comment type="function">
    <text evidence="1">Catalyzes the release of premature peptidyl moieties from peptidyl-tRNA molecules trapped in stalled 50S ribosomal subunits, and thus maintains levels of free tRNAs and 50S ribosomes.</text>
</comment>
<comment type="catalytic activity">
    <reaction evidence="1">
        <text>an N-acyl-L-alpha-aminoacyl-tRNA + H2O = an N-acyl-L-amino acid + a tRNA + H(+)</text>
        <dbReference type="Rhea" id="RHEA:54448"/>
        <dbReference type="Rhea" id="RHEA-COMP:10123"/>
        <dbReference type="Rhea" id="RHEA-COMP:13883"/>
        <dbReference type="ChEBI" id="CHEBI:15377"/>
        <dbReference type="ChEBI" id="CHEBI:15378"/>
        <dbReference type="ChEBI" id="CHEBI:59874"/>
        <dbReference type="ChEBI" id="CHEBI:78442"/>
        <dbReference type="ChEBI" id="CHEBI:138191"/>
        <dbReference type="EC" id="3.1.1.29"/>
    </reaction>
</comment>
<comment type="subunit">
    <text evidence="1">Monomer.</text>
</comment>
<comment type="subcellular location">
    <subcellularLocation>
        <location evidence="1">Cytoplasm</location>
    </subcellularLocation>
</comment>
<comment type="similarity">
    <text evidence="1">Belongs to the PTH family.</text>
</comment>
<protein>
    <recommendedName>
        <fullName evidence="1">Peptidyl-tRNA hydrolase</fullName>
        <shortName evidence="1">Pth</shortName>
        <ecNumber evidence="1">3.1.1.29</ecNumber>
    </recommendedName>
</protein>
<feature type="chain" id="PRO_1000192962" description="Peptidyl-tRNA hydrolase">
    <location>
        <begin position="1"/>
        <end position="188"/>
    </location>
</feature>
<feature type="active site" description="Proton acceptor" evidence="1">
    <location>
        <position position="20"/>
    </location>
</feature>
<feature type="binding site" evidence="1">
    <location>
        <position position="15"/>
    </location>
    <ligand>
        <name>tRNA</name>
        <dbReference type="ChEBI" id="CHEBI:17843"/>
    </ligand>
</feature>
<feature type="binding site" evidence="1">
    <location>
        <position position="64"/>
    </location>
    <ligand>
        <name>tRNA</name>
        <dbReference type="ChEBI" id="CHEBI:17843"/>
    </ligand>
</feature>
<feature type="binding site" evidence="1">
    <location>
        <position position="66"/>
    </location>
    <ligand>
        <name>tRNA</name>
        <dbReference type="ChEBI" id="CHEBI:17843"/>
    </ligand>
</feature>
<feature type="binding site" evidence="1">
    <location>
        <position position="112"/>
    </location>
    <ligand>
        <name>tRNA</name>
        <dbReference type="ChEBI" id="CHEBI:17843"/>
    </ligand>
</feature>
<feature type="site" description="Discriminates between blocked and unblocked aminoacyl-tRNA" evidence="1">
    <location>
        <position position="10"/>
    </location>
</feature>
<feature type="site" description="Stabilizes the basic form of H active site to accept a proton" evidence="1">
    <location>
        <position position="91"/>
    </location>
</feature>
<proteinExistence type="inferred from homology"/>